<feature type="chain" id="PRO_1000122549" description="Aspartyl/glutamyl-tRNA(Asn/Gln) amidotransferase subunit C">
    <location>
        <begin position="1"/>
        <end position="94"/>
    </location>
</feature>
<name>GATC_CALBD</name>
<dbReference type="EC" id="6.3.5.-" evidence="1"/>
<dbReference type="EMBL" id="CP001393">
    <property type="protein sequence ID" value="ACM59875.1"/>
    <property type="molecule type" value="Genomic_DNA"/>
</dbReference>
<dbReference type="RefSeq" id="WP_015907313.1">
    <property type="nucleotide sequence ID" value="NC_012034.1"/>
</dbReference>
<dbReference type="SMR" id="B9MQ83"/>
<dbReference type="STRING" id="521460.Athe_0760"/>
<dbReference type="GeneID" id="31772115"/>
<dbReference type="KEGG" id="ate:Athe_0760"/>
<dbReference type="eggNOG" id="COG0721">
    <property type="taxonomic scope" value="Bacteria"/>
</dbReference>
<dbReference type="HOGENOM" id="CLU_105899_1_2_9"/>
<dbReference type="Proteomes" id="UP000007723">
    <property type="component" value="Chromosome"/>
</dbReference>
<dbReference type="GO" id="GO:0050566">
    <property type="term" value="F:asparaginyl-tRNA synthase (glutamine-hydrolyzing) activity"/>
    <property type="evidence" value="ECO:0007669"/>
    <property type="project" value="RHEA"/>
</dbReference>
<dbReference type="GO" id="GO:0005524">
    <property type="term" value="F:ATP binding"/>
    <property type="evidence" value="ECO:0007669"/>
    <property type="project" value="UniProtKB-KW"/>
</dbReference>
<dbReference type="GO" id="GO:0050567">
    <property type="term" value="F:glutaminyl-tRNA synthase (glutamine-hydrolyzing) activity"/>
    <property type="evidence" value="ECO:0007669"/>
    <property type="project" value="UniProtKB-UniRule"/>
</dbReference>
<dbReference type="GO" id="GO:0070681">
    <property type="term" value="P:glutaminyl-tRNAGln biosynthesis via transamidation"/>
    <property type="evidence" value="ECO:0007669"/>
    <property type="project" value="TreeGrafter"/>
</dbReference>
<dbReference type="GO" id="GO:0006450">
    <property type="term" value="P:regulation of translational fidelity"/>
    <property type="evidence" value="ECO:0007669"/>
    <property type="project" value="InterPro"/>
</dbReference>
<dbReference type="GO" id="GO:0006412">
    <property type="term" value="P:translation"/>
    <property type="evidence" value="ECO:0007669"/>
    <property type="project" value="UniProtKB-UniRule"/>
</dbReference>
<dbReference type="Gene3D" id="1.10.20.60">
    <property type="entry name" value="Glu-tRNAGln amidotransferase C subunit, N-terminal domain"/>
    <property type="match status" value="1"/>
</dbReference>
<dbReference type="HAMAP" id="MF_00122">
    <property type="entry name" value="GatC"/>
    <property type="match status" value="1"/>
</dbReference>
<dbReference type="InterPro" id="IPR036113">
    <property type="entry name" value="Asp/Glu-ADT_sf_sub_c"/>
</dbReference>
<dbReference type="InterPro" id="IPR003837">
    <property type="entry name" value="GatC"/>
</dbReference>
<dbReference type="NCBIfam" id="TIGR00135">
    <property type="entry name" value="gatC"/>
    <property type="match status" value="1"/>
</dbReference>
<dbReference type="PANTHER" id="PTHR15004">
    <property type="entry name" value="GLUTAMYL-TRNA(GLN) AMIDOTRANSFERASE SUBUNIT C, MITOCHONDRIAL"/>
    <property type="match status" value="1"/>
</dbReference>
<dbReference type="PANTHER" id="PTHR15004:SF0">
    <property type="entry name" value="GLUTAMYL-TRNA(GLN) AMIDOTRANSFERASE SUBUNIT C, MITOCHONDRIAL"/>
    <property type="match status" value="1"/>
</dbReference>
<dbReference type="Pfam" id="PF02686">
    <property type="entry name" value="GatC"/>
    <property type="match status" value="1"/>
</dbReference>
<dbReference type="SUPFAM" id="SSF141000">
    <property type="entry name" value="Glu-tRNAGln amidotransferase C subunit"/>
    <property type="match status" value="1"/>
</dbReference>
<sequence>MITRNDVEYVANLARLTLTEEEIEKMTKELGAIIEFANKLSELNTEGIEPTAHVLNIYNVFRSDEVKPSYPREEILKNAPSHDDVCIKVPKIVE</sequence>
<evidence type="ECO:0000255" key="1">
    <source>
        <dbReference type="HAMAP-Rule" id="MF_00122"/>
    </source>
</evidence>
<proteinExistence type="inferred from homology"/>
<keyword id="KW-0067">ATP-binding</keyword>
<keyword id="KW-0436">Ligase</keyword>
<keyword id="KW-0547">Nucleotide-binding</keyword>
<keyword id="KW-0648">Protein biosynthesis</keyword>
<comment type="function">
    <text evidence="1">Allows the formation of correctly charged Asn-tRNA(Asn) or Gln-tRNA(Gln) through the transamidation of misacylated Asp-tRNA(Asn) or Glu-tRNA(Gln) in organisms which lack either or both of asparaginyl-tRNA or glutaminyl-tRNA synthetases. The reaction takes place in the presence of glutamine and ATP through an activated phospho-Asp-tRNA(Asn) or phospho-Glu-tRNA(Gln).</text>
</comment>
<comment type="catalytic activity">
    <reaction evidence="1">
        <text>L-glutamyl-tRNA(Gln) + L-glutamine + ATP + H2O = L-glutaminyl-tRNA(Gln) + L-glutamate + ADP + phosphate + H(+)</text>
        <dbReference type="Rhea" id="RHEA:17521"/>
        <dbReference type="Rhea" id="RHEA-COMP:9681"/>
        <dbReference type="Rhea" id="RHEA-COMP:9684"/>
        <dbReference type="ChEBI" id="CHEBI:15377"/>
        <dbReference type="ChEBI" id="CHEBI:15378"/>
        <dbReference type="ChEBI" id="CHEBI:29985"/>
        <dbReference type="ChEBI" id="CHEBI:30616"/>
        <dbReference type="ChEBI" id="CHEBI:43474"/>
        <dbReference type="ChEBI" id="CHEBI:58359"/>
        <dbReference type="ChEBI" id="CHEBI:78520"/>
        <dbReference type="ChEBI" id="CHEBI:78521"/>
        <dbReference type="ChEBI" id="CHEBI:456216"/>
    </reaction>
</comment>
<comment type="catalytic activity">
    <reaction evidence="1">
        <text>L-aspartyl-tRNA(Asn) + L-glutamine + ATP + H2O = L-asparaginyl-tRNA(Asn) + L-glutamate + ADP + phosphate + 2 H(+)</text>
        <dbReference type="Rhea" id="RHEA:14513"/>
        <dbReference type="Rhea" id="RHEA-COMP:9674"/>
        <dbReference type="Rhea" id="RHEA-COMP:9677"/>
        <dbReference type="ChEBI" id="CHEBI:15377"/>
        <dbReference type="ChEBI" id="CHEBI:15378"/>
        <dbReference type="ChEBI" id="CHEBI:29985"/>
        <dbReference type="ChEBI" id="CHEBI:30616"/>
        <dbReference type="ChEBI" id="CHEBI:43474"/>
        <dbReference type="ChEBI" id="CHEBI:58359"/>
        <dbReference type="ChEBI" id="CHEBI:78515"/>
        <dbReference type="ChEBI" id="CHEBI:78516"/>
        <dbReference type="ChEBI" id="CHEBI:456216"/>
    </reaction>
</comment>
<comment type="subunit">
    <text evidence="1">Heterotrimer of A, B and C subunits.</text>
</comment>
<comment type="similarity">
    <text evidence="1">Belongs to the GatC family.</text>
</comment>
<gene>
    <name evidence="1" type="primary">gatC</name>
    <name type="ordered locus">Athe_0760</name>
</gene>
<organism>
    <name type="scientific">Caldicellulosiruptor bescii (strain ATCC BAA-1888 / DSM 6725 / KCTC 15123 / Z-1320)</name>
    <name type="common">Anaerocellum thermophilum</name>
    <dbReference type="NCBI Taxonomy" id="521460"/>
    <lineage>
        <taxon>Bacteria</taxon>
        <taxon>Bacillati</taxon>
        <taxon>Bacillota</taxon>
        <taxon>Bacillota incertae sedis</taxon>
        <taxon>Caldicellulosiruptorales</taxon>
        <taxon>Caldicellulosiruptoraceae</taxon>
        <taxon>Caldicellulosiruptor</taxon>
    </lineage>
</organism>
<protein>
    <recommendedName>
        <fullName evidence="1">Aspartyl/glutamyl-tRNA(Asn/Gln) amidotransferase subunit C</fullName>
        <shortName evidence="1">Asp/Glu-ADT subunit C</shortName>
        <ecNumber evidence="1">6.3.5.-</ecNumber>
    </recommendedName>
</protein>
<accession>B9MQ83</accession>
<reference key="1">
    <citation type="submission" date="2009-01" db="EMBL/GenBank/DDBJ databases">
        <title>Complete sequence of chromosome of Caldicellulosiruptor becscii DSM 6725.</title>
        <authorList>
            <person name="Lucas S."/>
            <person name="Copeland A."/>
            <person name="Lapidus A."/>
            <person name="Glavina del Rio T."/>
            <person name="Tice H."/>
            <person name="Bruce D."/>
            <person name="Goodwin L."/>
            <person name="Pitluck S."/>
            <person name="Sims D."/>
            <person name="Meincke L."/>
            <person name="Brettin T."/>
            <person name="Detter J.C."/>
            <person name="Han C."/>
            <person name="Larimer F."/>
            <person name="Land M."/>
            <person name="Hauser L."/>
            <person name="Kyrpides N."/>
            <person name="Ovchinnikova G."/>
            <person name="Kataeva I."/>
            <person name="Adams M.W.W."/>
        </authorList>
    </citation>
    <scope>NUCLEOTIDE SEQUENCE [LARGE SCALE GENOMIC DNA]</scope>
    <source>
        <strain>ATCC BAA-1888 / DSM 6725 / KCTC 15123 / Z-1320</strain>
    </source>
</reference>